<proteinExistence type="inferred from homology"/>
<protein>
    <recommendedName>
        <fullName evidence="1">Hemagglutinin</fullName>
    </recommendedName>
    <component>
        <recommendedName>
            <fullName evidence="1">Hemagglutinin HA1 chain</fullName>
        </recommendedName>
    </component>
    <component>
        <recommendedName>
            <fullName evidence="1">Hemagglutinin HA2 chain</fullName>
        </recommendedName>
    </component>
</protein>
<gene>
    <name evidence="1" type="primary">HA</name>
</gene>
<keyword id="KW-1167">Clathrin- and caveolin-independent endocytosis of virus by host</keyword>
<keyword id="KW-1165">Clathrin-mediated endocytosis of virus by host</keyword>
<keyword id="KW-1015">Disulfide bond</keyword>
<keyword id="KW-1170">Fusion of virus membrane with host endosomal membrane</keyword>
<keyword id="KW-1168">Fusion of virus membrane with host membrane</keyword>
<keyword id="KW-0325">Glycoprotein</keyword>
<keyword id="KW-0348">Hemagglutinin</keyword>
<keyword id="KW-1032">Host cell membrane</keyword>
<keyword id="KW-1043">Host membrane</keyword>
<keyword id="KW-0945">Host-virus interaction</keyword>
<keyword id="KW-0449">Lipoprotein</keyword>
<keyword id="KW-0472">Membrane</keyword>
<keyword id="KW-0564">Palmitate</keyword>
<keyword id="KW-0732">Signal</keyword>
<keyword id="KW-0812">Transmembrane</keyword>
<keyword id="KW-1133">Transmembrane helix</keyword>
<keyword id="KW-1161">Viral attachment to host cell</keyword>
<keyword id="KW-0261">Viral envelope protein</keyword>
<keyword id="KW-1162">Viral penetration into host cytoplasm</keyword>
<keyword id="KW-0946">Virion</keyword>
<keyword id="KW-1164">Virus endocytosis by host</keyword>
<keyword id="KW-1160">Virus entry into host cell</keyword>
<organism>
    <name type="scientific">Influenza A virus (strain A/Turkey/Wisconsin/1/1966 H9N2)</name>
    <dbReference type="NCBI Taxonomy" id="385620"/>
    <lineage>
        <taxon>Viruses</taxon>
        <taxon>Riboviria</taxon>
        <taxon>Orthornavirae</taxon>
        <taxon>Negarnaviricota</taxon>
        <taxon>Polyploviricotina</taxon>
        <taxon>Insthoviricetes</taxon>
        <taxon>Articulavirales</taxon>
        <taxon>Orthomyxoviridae</taxon>
        <taxon>Alphainfluenzavirus</taxon>
        <taxon>Alphainfluenzavirus influenzae</taxon>
        <taxon>Influenza A virus</taxon>
    </lineage>
</organism>
<name>HEMA_I66A1</name>
<feature type="signal peptide" evidence="1">
    <location>
        <begin position="1"/>
        <end position="18"/>
    </location>
</feature>
<feature type="chain" id="PRO_0000440408" description="Hemagglutinin" evidence="1">
    <location>
        <begin position="19"/>
        <end position="560"/>
    </location>
</feature>
<feature type="chain" id="PRO_0000039058" description="Hemagglutinin HA1 chain" evidence="1">
    <location>
        <begin position="19"/>
        <end position="337"/>
    </location>
</feature>
<feature type="chain" id="PRO_0000039059" description="Hemagglutinin HA2 chain" evidence="1">
    <location>
        <begin position="339"/>
        <end position="560"/>
    </location>
</feature>
<feature type="topological domain" description="Extracellular" evidence="1">
    <location>
        <begin position="19"/>
        <end position="526"/>
    </location>
</feature>
<feature type="transmembrane region" description="Helical" evidence="1">
    <location>
        <begin position="527"/>
        <end position="547"/>
    </location>
</feature>
<feature type="topological domain" description="Cytoplasmic" evidence="1">
    <location>
        <begin position="548"/>
        <end position="560"/>
    </location>
</feature>
<feature type="site" description="Cleavage; by host" evidence="1">
    <location>
        <begin position="338"/>
        <end position="339"/>
    </location>
</feature>
<feature type="lipid moiety-binding region" description="S-palmitoyl cysteine; by host" evidence="1">
    <location>
        <position position="556"/>
    </location>
</feature>
<feature type="lipid moiety-binding region" description="S-palmitoyl cysteine; by host" evidence="1">
    <location>
        <position position="559"/>
    </location>
</feature>
<feature type="glycosylation site" description="N-linked (GlcNAc...) asparagine; by host" evidence="1">
    <location>
        <position position="29"/>
    </location>
</feature>
<feature type="glycosylation site" description="N-linked (GlcNAc...) asparagine; by host" evidence="1">
    <location>
        <position position="141"/>
    </location>
</feature>
<feature type="glycosylation site" description="N-linked (GlcNAc...) asparagine; by host" evidence="1">
    <location>
        <position position="218"/>
    </location>
</feature>
<feature type="glycosylation site" description="N-linked (GlcNAc...) asparagine; by host" evidence="1">
    <location>
        <position position="298"/>
    </location>
</feature>
<feature type="glycosylation site" description="N-linked (GlcNAc...) asparagine; by host" evidence="1">
    <location>
        <position position="305"/>
    </location>
</feature>
<feature type="glycosylation site" description="N-linked (GlcNAc...) asparagine; by host" evidence="1">
    <location>
        <position position="492"/>
    </location>
</feature>
<feature type="disulfide bond" description="Interchain (between HA1 and HA2 chains)" evidence="1">
    <location>
        <begin position="22"/>
        <end position="475"/>
    </location>
</feature>
<feature type="disulfide bond" evidence="1">
    <location>
        <begin position="60"/>
        <end position="286"/>
    </location>
</feature>
<feature type="disulfide bond" evidence="1">
    <location>
        <begin position="73"/>
        <end position="85"/>
    </location>
</feature>
<feature type="disulfide bond" evidence="1">
    <location>
        <begin position="108"/>
        <end position="151"/>
    </location>
</feature>
<feature type="disulfide bond" evidence="1">
    <location>
        <begin position="290"/>
        <end position="314"/>
    </location>
</feature>
<feature type="disulfide bond" evidence="1">
    <location>
        <begin position="482"/>
        <end position="486"/>
    </location>
</feature>
<feature type="sequence conflict" description="In Ref. 2; AAY52519." evidence="2" ref="2">
    <original>M</original>
    <variation>V</variation>
    <location>
        <position position="58"/>
    </location>
</feature>
<feature type="sequence conflict" description="In Ref. 3; ABI84523." evidence="2" ref="3">
    <original>K</original>
    <variation>N</variation>
    <location>
        <position position="165"/>
    </location>
</feature>
<feature type="sequence conflict" description="In Ref. 3; ABI84523." evidence="2" ref="3">
    <original>N</original>
    <variation>K</variation>
    <location>
        <position position="205"/>
    </location>
</feature>
<feature type="sequence conflict" description="In Ref. 2; AAY52519 and 3; ABI84523." evidence="2" ref="2 3">
    <original>P</original>
    <variation>A</variation>
    <location>
        <position position="326"/>
    </location>
</feature>
<comment type="function">
    <text>Binds to sialic acid-containing receptors on the cell surface, bringing about the attachment of the virus particle to the cell. This attachment induces virion internalization of about two third of the virus particles through clathrin-dependent endocytosis and about one third through a clathrin- and caveolin-independent pathway. Plays a major role in the determination of host range restriction and virulence. Class I viral fusion protein. Responsible for penetration of the virus into the cell cytoplasm by mediating the fusion of the membrane of the endocytosed virus particle with the endosomal membrane. Low pH in endosomes induces an irreversible conformational change in HA2, releasing the fusion hydrophobic peptide. Several trimers are required to form a competent fusion pore.</text>
</comment>
<comment type="function">
    <text evidence="1">Binds to sialic acid-containing receptors on the cell surface, bringing about the attachment of the virus particle to the cell. This attachment induces virion internalization either through clathrin-dependent endocytosis or through clathrin- and caveolin-independent pathway. Plays a major role in the determination of host range restriction and virulence. Class I viral fusion protein. Responsible for penetration of the virus into the cell cytoplasm by mediating the fusion of the membrane of the endocytosed virus particle with the endosomal membrane. Low pH in endosomes induces an irreversible conformational change in HA2, releasing the fusion hydrophobic peptide. Several trimers are required to form a competent fusion pore.</text>
</comment>
<comment type="subunit">
    <text evidence="1">Homotrimer of disulfide-linked HA1-HA2.</text>
</comment>
<comment type="subcellular location">
    <subcellularLocation>
        <location evidence="1">Virion membrane</location>
        <topology evidence="1">Single-pass type I membrane protein</topology>
    </subcellularLocation>
    <subcellularLocation>
        <location evidence="1">Host apical cell membrane</location>
        <topology evidence="1">Single-pass type I membrane protein</topology>
    </subcellularLocation>
    <text evidence="1">Targeted to the apical plasma membrane in epithelial polarized cells through a signal present in the transmembrane domain. Associated with glycosphingolipid- and cholesterol-enriched detergent-resistant lipid rafts.</text>
</comment>
<comment type="PTM">
    <text evidence="1">Palmitoylated.</text>
</comment>
<comment type="PTM">
    <text evidence="1">In natural infection, inactive HA is matured into HA1 and HA2 outside the cell by one or more trypsin-like, arginine-specific endoprotease secreted by the bronchial epithelial cells. One identified protease that may be involved in this process is secreted in lungs by club cells.</text>
</comment>
<comment type="miscellaneous">
    <text>Major glycoprotein, comprises over 80% of the envelope proteins present in virus particle.</text>
</comment>
<comment type="miscellaneous">
    <text>The extent of infection into host organism is determined by HA. Influenza viruses bud from the apical surface of polarized epithelial cells (e.g. bronchial epithelial cells) into lumen of lungs and are therefore usually pneumotropic. The reason is that HA is cleaved by tryptase clara which is restricted to lungs. However, HAs of H5 and H7 pantropic avian viruses subtypes can be cleaved by furin and subtilisin-type enzymes, allowing the virus to grow in other organs than lungs.</text>
</comment>
<comment type="miscellaneous">
    <text evidence="2">The influenza A genome consist of 8 RNA segments. Genetic variation of hemagglutinin and/or neuraminidase genes results in the emergence of new influenza strains. The mechanism of variation can be the result of point mutations or the result of genetic reassortment between segments of two different strains.</text>
</comment>
<comment type="similarity">
    <text evidence="1">Belongs to the influenza viruses hemagglutinin family.</text>
</comment>
<accession>P03457</accession>
<accession>Q0A459</accession>
<accession>Q3SBE7</accession>
<sequence length="560" mass="62653">METKAIIAALLMVTAANADKICIGYQSTNSTETVDTLTESNVPVTHTKELLHTEHNGMLCATDLGHPLILDTCTIEGLIYGNPSCDILLGGKEWSYIVERSSAVNGMCYPGNVENLEELRSLFSSAKSYKRIQIFPDKTWNVTYSGTSRACSNSFYRSMRWLTHKSNSYPFQNAHYTNNERENILFMWGIHHPPTDTEQTDLYKNADTTTSVTTEDINRTFKPVIGPRPLVNGQQGRIDYYWSVLKPGQTLRIRSNGNLIAPWYGHVLTGESHGRILKTDLNNGNCVVQCQTEKGGLNTTLPFHNISKYAFGNCPKYVGVKSLKLPVGLRNVPAVSSRGLFGAIAGFIEGGWPGLVAGWYGFQHSNDQGVGMAADKGSTQKAIDKITSKVNNIIDKMNKQYEVIDHEFNELEARLNMINNKIDDQIQDIWAYNAELLVLLENQKTLDEHDANVNNLYNKVKRALGSNAVEDGNGCFELYHKCDDQCMETIRNGTYDRQKYQEESRLERQKIEGVKLESEGTYKILTIYSTVASSLVLAMGFAAFLFWAMSNGSCRCNICI</sequence>
<evidence type="ECO:0000255" key="1">
    <source>
        <dbReference type="HAMAP-Rule" id="MF_04072"/>
    </source>
</evidence>
<evidence type="ECO:0000305" key="2"/>
<organismHost>
    <name type="scientific">Aves</name>
    <dbReference type="NCBI Taxonomy" id="8782"/>
</organismHost>
<reference key="1">
    <citation type="journal article" date="1991" name="Virology">
        <title>Comparison of complete amino acid sequences and receptor-binding properties among 13 serotypes of hemagglutinins of influenza A viruses.</title>
        <authorList>
            <person name="Nobusawa E."/>
            <person name="Aoyama T."/>
            <person name="Kato H."/>
            <person name="Suzuki Y."/>
            <person name="Tateno Y."/>
            <person name="Nakajima K."/>
        </authorList>
    </citation>
    <scope>NUCLEOTIDE SEQUENCE [GENOMIC RNA]</scope>
</reference>
<reference key="2">
    <citation type="journal article" date="2005" name="Virology">
        <title>Evolution of H9N2 influenza viruses from domestic poultry in Mainland China.</title>
        <authorList>
            <person name="Li C."/>
            <person name="Yu K."/>
            <person name="Tian G."/>
            <person name="Yu D."/>
            <person name="Liu L."/>
            <person name="Jing B."/>
            <person name="Ping J."/>
            <person name="Chen H."/>
        </authorList>
    </citation>
    <scope>NUCLEOTIDE SEQUENCE [GENOMIC RNA]</scope>
</reference>
<reference key="3">
    <citation type="journal article" date="2006" name="Science">
        <title>Large-scale sequence analysis of avian influenza isolates.</title>
        <authorList>
            <person name="Obenauer J.C."/>
            <person name="Denson J."/>
            <person name="Mehta P.K."/>
            <person name="Su X."/>
            <person name="Mukatira S."/>
            <person name="Finkelstein D.B."/>
            <person name="Xu X."/>
            <person name="Wang J."/>
            <person name="Ma J."/>
            <person name="Fan Y."/>
            <person name="Rakestraw K.M."/>
            <person name="Webster R.G."/>
            <person name="Hoffmann E."/>
            <person name="Krauss S."/>
            <person name="Zheng J."/>
            <person name="Zhang Z."/>
            <person name="Naeve C.W."/>
        </authorList>
    </citation>
    <scope>NUCLEOTIDE SEQUENCE [GENOMIC RNA]</scope>
</reference>
<reference key="4">
    <citation type="journal article" date="1981" name="Proc. Natl. Acad. Sci. U.S.A.">
        <title>Sequence relationships among the hemagglutinin genes of 12 subtypes of influenza A virus.</title>
        <authorList>
            <person name="Air G.M."/>
        </authorList>
    </citation>
    <scope>NUCLEOTIDE SEQUENCE [GENOMIC RNA] OF 1-99</scope>
</reference>
<dbReference type="EMBL" id="D90305">
    <property type="protein sequence ID" value="BAA14335.1"/>
    <property type="molecule type" value="Genomic_RNA"/>
</dbReference>
<dbReference type="EMBL" id="DQ067444">
    <property type="protein sequence ID" value="AAY52519.1"/>
    <property type="molecule type" value="Genomic_RNA"/>
</dbReference>
<dbReference type="EMBL" id="CY014663">
    <property type="protein sequence ID" value="ABI84523.1"/>
    <property type="molecule type" value="Genomic_RNA"/>
</dbReference>
<dbReference type="EMBL" id="J02166">
    <property type="protein sequence ID" value="AAA43208.1"/>
    <property type="molecule type" value="Genomic_RNA"/>
</dbReference>
<dbReference type="SMR" id="P03457"/>
<dbReference type="GlyCosmos" id="P03457">
    <property type="glycosylation" value="6 sites, No reported glycans"/>
</dbReference>
<dbReference type="PRO" id="PR:P03457"/>
<dbReference type="Proteomes" id="UP000115522">
    <property type="component" value="Genome"/>
</dbReference>
<dbReference type="GO" id="GO:0020002">
    <property type="term" value="C:host cell plasma membrane"/>
    <property type="evidence" value="ECO:0007669"/>
    <property type="project" value="UniProtKB-SubCell"/>
</dbReference>
<dbReference type="GO" id="GO:0016020">
    <property type="term" value="C:membrane"/>
    <property type="evidence" value="ECO:0007669"/>
    <property type="project" value="UniProtKB-UniRule"/>
</dbReference>
<dbReference type="GO" id="GO:0019031">
    <property type="term" value="C:viral envelope"/>
    <property type="evidence" value="ECO:0007669"/>
    <property type="project" value="UniProtKB-UniRule"/>
</dbReference>
<dbReference type="GO" id="GO:0055036">
    <property type="term" value="C:virion membrane"/>
    <property type="evidence" value="ECO:0007669"/>
    <property type="project" value="UniProtKB-SubCell"/>
</dbReference>
<dbReference type="GO" id="GO:0046789">
    <property type="term" value="F:host cell surface receptor binding"/>
    <property type="evidence" value="ECO:0007669"/>
    <property type="project" value="UniProtKB-UniRule"/>
</dbReference>
<dbReference type="GO" id="GO:0075512">
    <property type="term" value="P:clathrin-dependent endocytosis of virus by host cell"/>
    <property type="evidence" value="ECO:0007669"/>
    <property type="project" value="UniProtKB-UniRule"/>
</dbReference>
<dbReference type="GO" id="GO:0039654">
    <property type="term" value="P:fusion of virus membrane with host endosome membrane"/>
    <property type="evidence" value="ECO:0007669"/>
    <property type="project" value="UniProtKB-UniRule"/>
</dbReference>
<dbReference type="GO" id="GO:0019064">
    <property type="term" value="P:fusion of virus membrane with host plasma membrane"/>
    <property type="evidence" value="ECO:0007669"/>
    <property type="project" value="InterPro"/>
</dbReference>
<dbReference type="GO" id="GO:0046761">
    <property type="term" value="P:viral budding from plasma membrane"/>
    <property type="evidence" value="ECO:0007669"/>
    <property type="project" value="UniProtKB-UniRule"/>
</dbReference>
<dbReference type="GO" id="GO:0019062">
    <property type="term" value="P:virion attachment to host cell"/>
    <property type="evidence" value="ECO:0007669"/>
    <property type="project" value="UniProtKB-KW"/>
</dbReference>
<dbReference type="Gene3D" id="3.90.20.10">
    <property type="match status" value="1"/>
</dbReference>
<dbReference type="Gene3D" id="3.90.209.20">
    <property type="match status" value="1"/>
</dbReference>
<dbReference type="HAMAP" id="MF_04072">
    <property type="entry name" value="INFV_HEMA"/>
    <property type="match status" value="1"/>
</dbReference>
<dbReference type="InterPro" id="IPR008980">
    <property type="entry name" value="Capsid_hemagglutn"/>
</dbReference>
<dbReference type="InterPro" id="IPR013828">
    <property type="entry name" value="Hemagglutn_HA1_a/b_dom_sf"/>
</dbReference>
<dbReference type="InterPro" id="IPR000149">
    <property type="entry name" value="Hemagglutn_influenz_A"/>
</dbReference>
<dbReference type="InterPro" id="IPR001364">
    <property type="entry name" value="Hemagglutn_influenz_A/B"/>
</dbReference>
<dbReference type="Pfam" id="PF00509">
    <property type="entry name" value="Hemagglutinin"/>
    <property type="match status" value="1"/>
</dbReference>
<dbReference type="PRINTS" id="PR00330">
    <property type="entry name" value="HEMAGGLUTN1"/>
</dbReference>
<dbReference type="PRINTS" id="PR00329">
    <property type="entry name" value="HEMAGGLUTN12"/>
</dbReference>
<dbReference type="SUPFAM" id="SSF58064">
    <property type="entry name" value="Influenza hemagglutinin (stalk)"/>
    <property type="match status" value="1"/>
</dbReference>
<dbReference type="SUPFAM" id="SSF49818">
    <property type="entry name" value="Viral protein domain"/>
    <property type="match status" value="1"/>
</dbReference>